<feature type="chain" id="PRO_1000186279" description="Pyridoxine/pyridoxamine 5'-phosphate oxidase">
    <location>
        <begin position="1"/>
        <end position="218"/>
    </location>
</feature>
<feature type="binding site" evidence="1">
    <location>
        <begin position="12"/>
        <end position="15"/>
    </location>
    <ligand>
        <name>substrate</name>
    </ligand>
</feature>
<feature type="binding site" evidence="1">
    <location>
        <begin position="65"/>
        <end position="70"/>
    </location>
    <ligand>
        <name>FMN</name>
        <dbReference type="ChEBI" id="CHEBI:58210"/>
    </ligand>
</feature>
<feature type="binding site" evidence="1">
    <location>
        <position position="70"/>
    </location>
    <ligand>
        <name>substrate</name>
    </ligand>
</feature>
<feature type="binding site" evidence="1">
    <location>
        <begin position="80"/>
        <end position="81"/>
    </location>
    <ligand>
        <name>FMN</name>
        <dbReference type="ChEBI" id="CHEBI:58210"/>
    </ligand>
</feature>
<feature type="binding site" evidence="1">
    <location>
        <position position="87"/>
    </location>
    <ligand>
        <name>FMN</name>
        <dbReference type="ChEBI" id="CHEBI:58210"/>
    </ligand>
</feature>
<feature type="binding site" evidence="1">
    <location>
        <position position="109"/>
    </location>
    <ligand>
        <name>FMN</name>
        <dbReference type="ChEBI" id="CHEBI:58210"/>
    </ligand>
</feature>
<feature type="binding site" evidence="1">
    <location>
        <position position="127"/>
    </location>
    <ligand>
        <name>substrate</name>
    </ligand>
</feature>
<feature type="binding site" evidence="1">
    <location>
        <position position="131"/>
    </location>
    <ligand>
        <name>substrate</name>
    </ligand>
</feature>
<feature type="binding site" evidence="1">
    <location>
        <position position="135"/>
    </location>
    <ligand>
        <name>substrate</name>
    </ligand>
</feature>
<feature type="binding site" evidence="1">
    <location>
        <begin position="145"/>
        <end position="146"/>
    </location>
    <ligand>
        <name>FMN</name>
        <dbReference type="ChEBI" id="CHEBI:58210"/>
    </ligand>
</feature>
<feature type="binding site" evidence="1">
    <location>
        <position position="191"/>
    </location>
    <ligand>
        <name>FMN</name>
        <dbReference type="ChEBI" id="CHEBI:58210"/>
    </ligand>
</feature>
<feature type="binding site" evidence="1">
    <location>
        <begin position="197"/>
        <end position="199"/>
    </location>
    <ligand>
        <name>substrate</name>
    </ligand>
</feature>
<feature type="binding site" evidence="1">
    <location>
        <position position="201"/>
    </location>
    <ligand>
        <name>FMN</name>
        <dbReference type="ChEBI" id="CHEBI:58210"/>
    </ligand>
</feature>
<gene>
    <name evidence="1" type="primary">pdxH</name>
    <name type="ordered locus">AB57_3768</name>
</gene>
<dbReference type="EC" id="1.4.3.5" evidence="1"/>
<dbReference type="EMBL" id="CP001182">
    <property type="protein sequence ID" value="ACJ43120.1"/>
    <property type="molecule type" value="Genomic_DNA"/>
</dbReference>
<dbReference type="RefSeq" id="WP_001286115.1">
    <property type="nucleotide sequence ID" value="NC_011586.2"/>
</dbReference>
<dbReference type="SMR" id="B7ICC6"/>
<dbReference type="KEGG" id="abn:AB57_3768"/>
<dbReference type="HOGENOM" id="CLU_032263_2_2_6"/>
<dbReference type="UniPathway" id="UPA01068">
    <property type="reaction ID" value="UER00304"/>
</dbReference>
<dbReference type="UniPathway" id="UPA01068">
    <property type="reaction ID" value="UER00305"/>
</dbReference>
<dbReference type="Proteomes" id="UP000007094">
    <property type="component" value="Chromosome"/>
</dbReference>
<dbReference type="GO" id="GO:0010181">
    <property type="term" value="F:FMN binding"/>
    <property type="evidence" value="ECO:0007669"/>
    <property type="project" value="UniProtKB-UniRule"/>
</dbReference>
<dbReference type="GO" id="GO:0004733">
    <property type="term" value="F:pyridoxamine phosphate oxidase activity"/>
    <property type="evidence" value="ECO:0007669"/>
    <property type="project" value="UniProtKB-UniRule"/>
</dbReference>
<dbReference type="GO" id="GO:0008615">
    <property type="term" value="P:pyridoxine biosynthetic process"/>
    <property type="evidence" value="ECO:0007669"/>
    <property type="project" value="UniProtKB-KW"/>
</dbReference>
<dbReference type="Gene3D" id="2.30.110.10">
    <property type="entry name" value="Electron Transport, Fmn-binding Protein, Chain A"/>
    <property type="match status" value="1"/>
</dbReference>
<dbReference type="HAMAP" id="MF_01629">
    <property type="entry name" value="PdxH"/>
    <property type="match status" value="1"/>
</dbReference>
<dbReference type="InterPro" id="IPR000659">
    <property type="entry name" value="Pyridox_Oxase"/>
</dbReference>
<dbReference type="InterPro" id="IPR019740">
    <property type="entry name" value="Pyridox_Oxase_CS"/>
</dbReference>
<dbReference type="InterPro" id="IPR011576">
    <property type="entry name" value="Pyridox_Oxase_N"/>
</dbReference>
<dbReference type="InterPro" id="IPR019576">
    <property type="entry name" value="Pyridoxamine_oxidase_dimer_C"/>
</dbReference>
<dbReference type="InterPro" id="IPR012349">
    <property type="entry name" value="Split_barrel_FMN-bd"/>
</dbReference>
<dbReference type="NCBIfam" id="TIGR00558">
    <property type="entry name" value="pdxH"/>
    <property type="match status" value="1"/>
</dbReference>
<dbReference type="NCBIfam" id="NF004231">
    <property type="entry name" value="PRK05679.1"/>
    <property type="match status" value="1"/>
</dbReference>
<dbReference type="PANTHER" id="PTHR10851:SF0">
    <property type="entry name" value="PYRIDOXINE-5'-PHOSPHATE OXIDASE"/>
    <property type="match status" value="1"/>
</dbReference>
<dbReference type="PANTHER" id="PTHR10851">
    <property type="entry name" value="PYRIDOXINE-5-PHOSPHATE OXIDASE"/>
    <property type="match status" value="1"/>
</dbReference>
<dbReference type="Pfam" id="PF10590">
    <property type="entry name" value="PNP_phzG_C"/>
    <property type="match status" value="1"/>
</dbReference>
<dbReference type="Pfam" id="PF01243">
    <property type="entry name" value="PNPOx_N"/>
    <property type="match status" value="1"/>
</dbReference>
<dbReference type="PIRSF" id="PIRSF000190">
    <property type="entry name" value="Pyd_amn-ph_oxd"/>
    <property type="match status" value="1"/>
</dbReference>
<dbReference type="SUPFAM" id="SSF50475">
    <property type="entry name" value="FMN-binding split barrel"/>
    <property type="match status" value="1"/>
</dbReference>
<dbReference type="PROSITE" id="PS01064">
    <property type="entry name" value="PYRIDOX_OXIDASE"/>
    <property type="match status" value="1"/>
</dbReference>
<proteinExistence type="inferred from homology"/>
<protein>
    <recommendedName>
        <fullName evidence="1">Pyridoxine/pyridoxamine 5'-phosphate oxidase</fullName>
        <ecNumber evidence="1">1.4.3.5</ecNumber>
    </recommendedName>
    <alternativeName>
        <fullName evidence="1">PNP/PMP oxidase</fullName>
        <shortName evidence="1">PNPOx</shortName>
    </alternativeName>
    <alternativeName>
        <fullName evidence="1">Pyridoxal 5'-phosphate synthase</fullName>
    </alternativeName>
</protein>
<name>PDXH_ACIB5</name>
<reference key="1">
    <citation type="journal article" date="2008" name="J. Bacteriol.">
        <title>Comparative genome sequence analysis of multidrug-resistant Acinetobacter baumannii.</title>
        <authorList>
            <person name="Adams M.D."/>
            <person name="Goglin K."/>
            <person name="Molyneaux N."/>
            <person name="Hujer K.M."/>
            <person name="Lavender H."/>
            <person name="Jamison J.J."/>
            <person name="MacDonald I.J."/>
            <person name="Martin K.M."/>
            <person name="Russo T."/>
            <person name="Campagnari A.A."/>
            <person name="Hujer A.M."/>
            <person name="Bonomo R.A."/>
            <person name="Gill S.R."/>
        </authorList>
    </citation>
    <scope>NUCLEOTIDE SEQUENCE [LARGE SCALE GENOMIC DNA]</scope>
    <source>
        <strain>AB0057</strain>
    </source>
</reference>
<accession>B7ICC6</accession>
<evidence type="ECO:0000255" key="1">
    <source>
        <dbReference type="HAMAP-Rule" id="MF_01629"/>
    </source>
</evidence>
<comment type="function">
    <text evidence="1">Catalyzes the oxidation of either pyridoxine 5'-phosphate (PNP) or pyridoxamine 5'-phosphate (PMP) into pyridoxal 5'-phosphate (PLP).</text>
</comment>
<comment type="catalytic activity">
    <reaction evidence="1">
        <text>pyridoxamine 5'-phosphate + O2 + H2O = pyridoxal 5'-phosphate + H2O2 + NH4(+)</text>
        <dbReference type="Rhea" id="RHEA:15817"/>
        <dbReference type="ChEBI" id="CHEBI:15377"/>
        <dbReference type="ChEBI" id="CHEBI:15379"/>
        <dbReference type="ChEBI" id="CHEBI:16240"/>
        <dbReference type="ChEBI" id="CHEBI:28938"/>
        <dbReference type="ChEBI" id="CHEBI:58451"/>
        <dbReference type="ChEBI" id="CHEBI:597326"/>
        <dbReference type="EC" id="1.4.3.5"/>
    </reaction>
</comment>
<comment type="catalytic activity">
    <reaction evidence="1">
        <text>pyridoxine 5'-phosphate + O2 = pyridoxal 5'-phosphate + H2O2</text>
        <dbReference type="Rhea" id="RHEA:15149"/>
        <dbReference type="ChEBI" id="CHEBI:15379"/>
        <dbReference type="ChEBI" id="CHEBI:16240"/>
        <dbReference type="ChEBI" id="CHEBI:58589"/>
        <dbReference type="ChEBI" id="CHEBI:597326"/>
        <dbReference type="EC" id="1.4.3.5"/>
    </reaction>
</comment>
<comment type="cofactor">
    <cofactor evidence="1">
        <name>FMN</name>
        <dbReference type="ChEBI" id="CHEBI:58210"/>
    </cofactor>
    <text evidence="1">Binds 1 FMN per subunit.</text>
</comment>
<comment type="pathway">
    <text evidence="1">Cofactor metabolism; pyridoxal 5'-phosphate salvage; pyridoxal 5'-phosphate from pyridoxamine 5'-phosphate: step 1/1.</text>
</comment>
<comment type="pathway">
    <text evidence="1">Cofactor metabolism; pyridoxal 5'-phosphate salvage; pyridoxal 5'-phosphate from pyridoxine 5'-phosphate: step 1/1.</text>
</comment>
<comment type="subunit">
    <text evidence="1">Homodimer.</text>
</comment>
<comment type="similarity">
    <text evidence="1">Belongs to the pyridoxamine 5'-phosphate oxidase family.</text>
</comment>
<organism>
    <name type="scientific">Acinetobacter baumannii (strain AB0057)</name>
    <dbReference type="NCBI Taxonomy" id="480119"/>
    <lineage>
        <taxon>Bacteria</taxon>
        <taxon>Pseudomonadati</taxon>
        <taxon>Pseudomonadota</taxon>
        <taxon>Gammaproteobacteria</taxon>
        <taxon>Moraxellales</taxon>
        <taxon>Moraxellaceae</taxon>
        <taxon>Acinetobacter</taxon>
        <taxon>Acinetobacter calcoaceticus/baumannii complex</taxon>
    </lineage>
</organism>
<sequence length="218" mass="25474">MSDVIKDLSELRLSYEQGELYETQVASNPHEQFLGWFNHALAANLHEPYAMSLATASASGRPHVRTVLLRGATEAGYDFYTNYDSQKGIDLAENPYAELLFYWPSLERQVRVGGHVVKIPEQESTDYYHKRPRDSQIAAHISTPQSGKIESRELLQQRFQDLQQQVQSREVLDKPEFWGGYRLQPDYYEFWQGRPNRLHDRLSYEKIDGQWTLHRLMP</sequence>
<keyword id="KW-0285">Flavoprotein</keyword>
<keyword id="KW-0288">FMN</keyword>
<keyword id="KW-0560">Oxidoreductase</keyword>
<keyword id="KW-0664">Pyridoxine biosynthesis</keyword>